<comment type="function">
    <text evidence="1">Required for uptake of DNA by competent cells.</text>
</comment>
<comment type="subcellular location">
    <subcellularLocation>
        <location evidence="1">Cell membrane</location>
        <topology evidence="1">Peripheral membrane protein</topology>
        <orientation evidence="1">Cytoplasmic side</orientation>
    </subcellularLocation>
</comment>
<comment type="similarity">
    <text evidence="4">Belongs to the GSP E family.</text>
</comment>
<keyword id="KW-0067">ATP-binding</keyword>
<keyword id="KW-1003">Cell membrane</keyword>
<keyword id="KW-0178">Competence</keyword>
<keyword id="KW-0472">Membrane</keyword>
<keyword id="KW-0547">Nucleotide-binding</keyword>
<keyword id="KW-1185">Reference proteome</keyword>
<keyword id="KW-0813">Transport</keyword>
<accession>Q9K919</accession>
<evidence type="ECO:0000250" key="1"/>
<evidence type="ECO:0000250" key="2">
    <source>
        <dbReference type="UniProtKB" id="Q8DN86"/>
    </source>
</evidence>
<evidence type="ECO:0000255" key="3"/>
<evidence type="ECO:0000305" key="4"/>
<sequence>MTTIHNQSRKLLLQALRQGASDIHLSGTREDGIIQFRLNGRLAPFQRIPLQTAERLVSHFKFSAGLDIGERRKPQSGAMDLILEQKIPVSLRVSTLPTPLFEAVAIRLHPQQTPFALESIPLIKRQAQQLISLMTRTQGLILLTGATGSGKTTTLYAMLQKALHMQNLHIVTIEDPIEQLNPAFTQFEMNEKAQLTYEVGLKAALRHDPDVIMIGEIRDQTTAVYAVRAALTGHLVLATIHSANARGTITRLCEMGVALHDLREVVVAIIAQELISRKCPLCLSSDCSPYCTWLNNRKRAAIFDILEGKALQEALTANDSSFDGLGKERRFAIALGYIEEKEAKNRAL</sequence>
<gene>
    <name type="primary">comGA</name>
    <name type="ordered locus">BH2832</name>
</gene>
<dbReference type="EMBL" id="BA000004">
    <property type="protein sequence ID" value="BAB06551.1"/>
    <property type="molecule type" value="Genomic_DNA"/>
</dbReference>
<dbReference type="PIR" id="H84003">
    <property type="entry name" value="H84003"/>
</dbReference>
<dbReference type="RefSeq" id="WP_010898980.1">
    <property type="nucleotide sequence ID" value="NC_002570.2"/>
</dbReference>
<dbReference type="SMR" id="Q9K919"/>
<dbReference type="STRING" id="272558.gene:10728741"/>
<dbReference type="GeneID" id="87598360"/>
<dbReference type="KEGG" id="bha:BH2832"/>
<dbReference type="eggNOG" id="COG2804">
    <property type="taxonomic scope" value="Bacteria"/>
</dbReference>
<dbReference type="HOGENOM" id="CLU_013446_3_0_9"/>
<dbReference type="OrthoDB" id="9808272at2"/>
<dbReference type="Proteomes" id="UP000001258">
    <property type="component" value="Chromosome"/>
</dbReference>
<dbReference type="GO" id="GO:0005886">
    <property type="term" value="C:plasma membrane"/>
    <property type="evidence" value="ECO:0007669"/>
    <property type="project" value="UniProtKB-SubCell"/>
</dbReference>
<dbReference type="GO" id="GO:0005524">
    <property type="term" value="F:ATP binding"/>
    <property type="evidence" value="ECO:0007669"/>
    <property type="project" value="UniProtKB-KW"/>
</dbReference>
<dbReference type="GO" id="GO:0016887">
    <property type="term" value="F:ATP hydrolysis activity"/>
    <property type="evidence" value="ECO:0007669"/>
    <property type="project" value="TreeGrafter"/>
</dbReference>
<dbReference type="GO" id="GO:0030420">
    <property type="term" value="P:establishment of competence for transformation"/>
    <property type="evidence" value="ECO:0007669"/>
    <property type="project" value="UniProtKB-KW"/>
</dbReference>
<dbReference type="CDD" id="cd01129">
    <property type="entry name" value="PulE-GspE-like"/>
    <property type="match status" value="1"/>
</dbReference>
<dbReference type="Gene3D" id="3.30.450.90">
    <property type="match status" value="1"/>
</dbReference>
<dbReference type="Gene3D" id="3.40.50.300">
    <property type="entry name" value="P-loop containing nucleotide triphosphate hydrolases"/>
    <property type="match status" value="1"/>
</dbReference>
<dbReference type="InterPro" id="IPR047667">
    <property type="entry name" value="ATPase_ComGA"/>
</dbReference>
<dbReference type="InterPro" id="IPR027417">
    <property type="entry name" value="P-loop_NTPase"/>
</dbReference>
<dbReference type="InterPro" id="IPR001482">
    <property type="entry name" value="T2SS/T4SS_dom"/>
</dbReference>
<dbReference type="NCBIfam" id="NF041000">
    <property type="entry name" value="ATPase_ComGA"/>
    <property type="match status" value="1"/>
</dbReference>
<dbReference type="PANTHER" id="PTHR30258:SF2">
    <property type="entry name" value="COMG OPERON PROTEIN 1"/>
    <property type="match status" value="1"/>
</dbReference>
<dbReference type="PANTHER" id="PTHR30258">
    <property type="entry name" value="TYPE II SECRETION SYSTEM PROTEIN GSPE-RELATED"/>
    <property type="match status" value="1"/>
</dbReference>
<dbReference type="Pfam" id="PF00437">
    <property type="entry name" value="T2SSE"/>
    <property type="match status" value="1"/>
</dbReference>
<dbReference type="SUPFAM" id="SSF52540">
    <property type="entry name" value="P-loop containing nucleoside triphosphate hydrolases"/>
    <property type="match status" value="1"/>
</dbReference>
<dbReference type="PROSITE" id="PS00662">
    <property type="entry name" value="T2SP_E"/>
    <property type="match status" value="1"/>
</dbReference>
<proteinExistence type="inferred from homology"/>
<feature type="chain" id="PRO_0000207292" description="Competence protein ComGA">
    <location>
        <begin position="1"/>
        <end position="348"/>
    </location>
</feature>
<feature type="binding site" evidence="3">
    <location>
        <begin position="145"/>
        <end position="152"/>
    </location>
    <ligand>
        <name>ATP</name>
        <dbReference type="ChEBI" id="CHEBI:30616"/>
    </ligand>
</feature>
<name>COMGA_HALH5</name>
<organism>
    <name type="scientific">Halalkalibacterium halodurans (strain ATCC BAA-125 / DSM 18197 / FERM 7344 / JCM 9153 / C-125)</name>
    <name type="common">Bacillus halodurans</name>
    <dbReference type="NCBI Taxonomy" id="272558"/>
    <lineage>
        <taxon>Bacteria</taxon>
        <taxon>Bacillati</taxon>
        <taxon>Bacillota</taxon>
        <taxon>Bacilli</taxon>
        <taxon>Bacillales</taxon>
        <taxon>Bacillaceae</taxon>
        <taxon>Halalkalibacterium (ex Joshi et al. 2022)</taxon>
    </lineage>
</organism>
<protein>
    <recommendedName>
        <fullName evidence="2">Competence protein ComGA</fullName>
    </recommendedName>
    <alternativeName>
        <fullName evidence="4">ComG operon protein 1 homolog</fullName>
    </alternativeName>
</protein>
<reference key="1">
    <citation type="journal article" date="2000" name="Nucleic Acids Res.">
        <title>Complete genome sequence of the alkaliphilic bacterium Bacillus halodurans and genomic sequence comparison with Bacillus subtilis.</title>
        <authorList>
            <person name="Takami H."/>
            <person name="Nakasone K."/>
            <person name="Takaki Y."/>
            <person name="Maeno G."/>
            <person name="Sasaki R."/>
            <person name="Masui N."/>
            <person name="Fuji F."/>
            <person name="Hirama C."/>
            <person name="Nakamura Y."/>
            <person name="Ogasawara N."/>
            <person name="Kuhara S."/>
            <person name="Horikoshi K."/>
        </authorList>
    </citation>
    <scope>NUCLEOTIDE SEQUENCE [LARGE SCALE GENOMIC DNA]</scope>
    <source>
        <strain>ATCC BAA-125 / DSM 18197 / FERM 7344 / JCM 9153 / C-125</strain>
    </source>
</reference>